<keyword id="KW-0067">ATP-binding</keyword>
<keyword id="KW-0963">Cytoplasm</keyword>
<keyword id="KW-0418">Kinase</keyword>
<keyword id="KW-0520">NAD</keyword>
<keyword id="KW-0521">NADP</keyword>
<keyword id="KW-0547">Nucleotide-binding</keyword>
<keyword id="KW-0808">Transferase</keyword>
<gene>
    <name evidence="1" type="primary">nadK</name>
    <name type="ordered locus">Sputcn32_1273</name>
</gene>
<reference key="1">
    <citation type="submission" date="2007-04" db="EMBL/GenBank/DDBJ databases">
        <title>Complete sequence of Shewanella putrefaciens CN-32.</title>
        <authorList>
            <consortium name="US DOE Joint Genome Institute"/>
            <person name="Copeland A."/>
            <person name="Lucas S."/>
            <person name="Lapidus A."/>
            <person name="Barry K."/>
            <person name="Detter J.C."/>
            <person name="Glavina del Rio T."/>
            <person name="Hammon N."/>
            <person name="Israni S."/>
            <person name="Dalin E."/>
            <person name="Tice H."/>
            <person name="Pitluck S."/>
            <person name="Chain P."/>
            <person name="Malfatti S."/>
            <person name="Shin M."/>
            <person name="Vergez L."/>
            <person name="Schmutz J."/>
            <person name="Larimer F."/>
            <person name="Land M."/>
            <person name="Hauser L."/>
            <person name="Kyrpides N."/>
            <person name="Mikhailova N."/>
            <person name="Romine M.F."/>
            <person name="Fredrickson J."/>
            <person name="Tiedje J."/>
            <person name="Richardson P."/>
        </authorList>
    </citation>
    <scope>NUCLEOTIDE SEQUENCE [LARGE SCALE GENOMIC DNA]</scope>
    <source>
        <strain>CN-32 / ATCC BAA-453</strain>
    </source>
</reference>
<protein>
    <recommendedName>
        <fullName evidence="1">NAD kinase</fullName>
        <ecNumber evidence="1">2.7.1.23</ecNumber>
    </recommendedName>
    <alternativeName>
        <fullName evidence="1">ATP-dependent NAD kinase</fullName>
    </alternativeName>
</protein>
<accession>A4Y4W8</accession>
<evidence type="ECO:0000255" key="1">
    <source>
        <dbReference type="HAMAP-Rule" id="MF_00361"/>
    </source>
</evidence>
<dbReference type="EC" id="2.7.1.23" evidence="1"/>
<dbReference type="EMBL" id="CP000681">
    <property type="protein sequence ID" value="ABP75001.1"/>
    <property type="molecule type" value="Genomic_DNA"/>
</dbReference>
<dbReference type="SMR" id="A4Y4W8"/>
<dbReference type="STRING" id="319224.Sputcn32_1273"/>
<dbReference type="KEGG" id="spc:Sputcn32_1273"/>
<dbReference type="eggNOG" id="COG0061">
    <property type="taxonomic scope" value="Bacteria"/>
</dbReference>
<dbReference type="HOGENOM" id="CLU_008831_0_1_6"/>
<dbReference type="GO" id="GO:0005737">
    <property type="term" value="C:cytoplasm"/>
    <property type="evidence" value="ECO:0007669"/>
    <property type="project" value="UniProtKB-SubCell"/>
</dbReference>
<dbReference type="GO" id="GO:0005524">
    <property type="term" value="F:ATP binding"/>
    <property type="evidence" value="ECO:0007669"/>
    <property type="project" value="UniProtKB-KW"/>
</dbReference>
<dbReference type="GO" id="GO:0046872">
    <property type="term" value="F:metal ion binding"/>
    <property type="evidence" value="ECO:0007669"/>
    <property type="project" value="UniProtKB-UniRule"/>
</dbReference>
<dbReference type="GO" id="GO:0051287">
    <property type="term" value="F:NAD binding"/>
    <property type="evidence" value="ECO:0007669"/>
    <property type="project" value="UniProtKB-ARBA"/>
</dbReference>
<dbReference type="GO" id="GO:0003951">
    <property type="term" value="F:NAD+ kinase activity"/>
    <property type="evidence" value="ECO:0007669"/>
    <property type="project" value="UniProtKB-UniRule"/>
</dbReference>
<dbReference type="GO" id="GO:0019674">
    <property type="term" value="P:NAD metabolic process"/>
    <property type="evidence" value="ECO:0007669"/>
    <property type="project" value="InterPro"/>
</dbReference>
<dbReference type="GO" id="GO:0006741">
    <property type="term" value="P:NADP biosynthetic process"/>
    <property type="evidence" value="ECO:0007669"/>
    <property type="project" value="UniProtKB-UniRule"/>
</dbReference>
<dbReference type="FunFam" id="2.60.200.30:FF:000001">
    <property type="entry name" value="NAD kinase"/>
    <property type="match status" value="1"/>
</dbReference>
<dbReference type="Gene3D" id="3.40.50.10330">
    <property type="entry name" value="Probable inorganic polyphosphate/atp-NAD kinase, domain 1"/>
    <property type="match status" value="1"/>
</dbReference>
<dbReference type="Gene3D" id="2.60.200.30">
    <property type="entry name" value="Probable inorganic polyphosphate/atp-NAD kinase, domain 2"/>
    <property type="match status" value="1"/>
</dbReference>
<dbReference type="HAMAP" id="MF_00361">
    <property type="entry name" value="NAD_kinase"/>
    <property type="match status" value="1"/>
</dbReference>
<dbReference type="InterPro" id="IPR017438">
    <property type="entry name" value="ATP-NAD_kinase_N"/>
</dbReference>
<dbReference type="InterPro" id="IPR017437">
    <property type="entry name" value="ATP-NAD_kinase_PpnK-typ_C"/>
</dbReference>
<dbReference type="InterPro" id="IPR016064">
    <property type="entry name" value="NAD/diacylglycerol_kinase_sf"/>
</dbReference>
<dbReference type="InterPro" id="IPR002504">
    <property type="entry name" value="NADK"/>
</dbReference>
<dbReference type="NCBIfam" id="NF002306">
    <property type="entry name" value="PRK01231.1"/>
    <property type="match status" value="1"/>
</dbReference>
<dbReference type="NCBIfam" id="NF002893">
    <property type="entry name" value="PRK03378.1"/>
    <property type="match status" value="1"/>
</dbReference>
<dbReference type="PANTHER" id="PTHR20275">
    <property type="entry name" value="NAD KINASE"/>
    <property type="match status" value="1"/>
</dbReference>
<dbReference type="PANTHER" id="PTHR20275:SF0">
    <property type="entry name" value="NAD KINASE"/>
    <property type="match status" value="1"/>
</dbReference>
<dbReference type="Pfam" id="PF01513">
    <property type="entry name" value="NAD_kinase"/>
    <property type="match status" value="1"/>
</dbReference>
<dbReference type="Pfam" id="PF20143">
    <property type="entry name" value="NAD_kinase_C"/>
    <property type="match status" value="1"/>
</dbReference>
<dbReference type="SUPFAM" id="SSF111331">
    <property type="entry name" value="NAD kinase/diacylglycerol kinase-like"/>
    <property type="match status" value="1"/>
</dbReference>
<comment type="function">
    <text evidence="1">Involved in the regulation of the intracellular balance of NAD and NADP, and is a key enzyme in the biosynthesis of NADP. Catalyzes specifically the phosphorylation on 2'-hydroxyl of the adenosine moiety of NAD to yield NADP.</text>
</comment>
<comment type="catalytic activity">
    <reaction evidence="1">
        <text>NAD(+) + ATP = ADP + NADP(+) + H(+)</text>
        <dbReference type="Rhea" id="RHEA:18629"/>
        <dbReference type="ChEBI" id="CHEBI:15378"/>
        <dbReference type="ChEBI" id="CHEBI:30616"/>
        <dbReference type="ChEBI" id="CHEBI:57540"/>
        <dbReference type="ChEBI" id="CHEBI:58349"/>
        <dbReference type="ChEBI" id="CHEBI:456216"/>
        <dbReference type="EC" id="2.7.1.23"/>
    </reaction>
</comment>
<comment type="cofactor">
    <cofactor evidence="1">
        <name>a divalent metal cation</name>
        <dbReference type="ChEBI" id="CHEBI:60240"/>
    </cofactor>
</comment>
<comment type="subcellular location">
    <subcellularLocation>
        <location evidence="1">Cytoplasm</location>
    </subcellularLocation>
</comment>
<comment type="similarity">
    <text evidence="1">Belongs to the NAD kinase family.</text>
</comment>
<name>NADK_SHEPC</name>
<organism>
    <name type="scientific">Shewanella putrefaciens (strain CN-32 / ATCC BAA-453)</name>
    <dbReference type="NCBI Taxonomy" id="319224"/>
    <lineage>
        <taxon>Bacteria</taxon>
        <taxon>Pseudomonadati</taxon>
        <taxon>Pseudomonadota</taxon>
        <taxon>Gammaproteobacteria</taxon>
        <taxon>Alteromonadales</taxon>
        <taxon>Shewanellaceae</taxon>
        <taxon>Shewanella</taxon>
    </lineage>
</organism>
<feature type="chain" id="PRO_1000079515" description="NAD kinase">
    <location>
        <begin position="1"/>
        <end position="309"/>
    </location>
</feature>
<feature type="active site" description="Proton acceptor" evidence="1">
    <location>
        <position position="89"/>
    </location>
</feature>
<feature type="binding site" evidence="1">
    <location>
        <begin position="89"/>
        <end position="90"/>
    </location>
    <ligand>
        <name>NAD(+)</name>
        <dbReference type="ChEBI" id="CHEBI:57540"/>
    </ligand>
</feature>
<feature type="binding site" evidence="1">
    <location>
        <begin position="163"/>
        <end position="164"/>
    </location>
    <ligand>
        <name>NAD(+)</name>
        <dbReference type="ChEBI" id="CHEBI:57540"/>
    </ligand>
</feature>
<feature type="binding site" evidence="1">
    <location>
        <position position="174"/>
    </location>
    <ligand>
        <name>NAD(+)</name>
        <dbReference type="ChEBI" id="CHEBI:57540"/>
    </ligand>
</feature>
<feature type="binding site" evidence="1">
    <location>
        <position position="191"/>
    </location>
    <ligand>
        <name>NAD(+)</name>
        <dbReference type="ChEBI" id="CHEBI:57540"/>
    </ligand>
</feature>
<feature type="binding site" evidence="1">
    <location>
        <position position="193"/>
    </location>
    <ligand>
        <name>NAD(+)</name>
        <dbReference type="ChEBI" id="CHEBI:57540"/>
    </ligand>
</feature>
<feature type="binding site" evidence="1">
    <location>
        <begin position="204"/>
        <end position="209"/>
    </location>
    <ligand>
        <name>NAD(+)</name>
        <dbReference type="ChEBI" id="CHEBI:57540"/>
    </ligand>
</feature>
<proteinExistence type="inferred from homology"/>
<sequence>MGINFDVSRPKARSSINMTTKFHTIGLIGKPHHLGTNQTLKRLHHWLTMQGYEVLAEERVSTELGTNIEAVDLLEIGARCDLAIVVGGDGNMLGAARVLARFDLGVIGVNRGNLGFLTDLPPDAFEEALARVLDGEFDTEHRFLLEAEVYRHGMLKASNTAVNEAVLHPGKIAHMIEFEVYIDDQFMYSQRADGMIVSTPTGSTAYALSAGGAILTPNLQALILVPMFPHTLSCRPIVVDACSTIKMVVSPENGENLEVSCDGHVHLAVLPGDEIIIRRSSERLRLIHPKGHNYFHVLRTKLGWGSKLF</sequence>